<comment type="function">
    <text evidence="1">Catalyzes the hydrolysis of short-chain aliphatic amides to their corresponding organic acids with release of ammonia.</text>
</comment>
<comment type="function">
    <text evidence="1">Also exhibits in vitro acyl transferase activity, transferring the acyl moiety of short-chain amides to hydroxylamine to form hydroxamates.</text>
</comment>
<comment type="catalytic activity">
    <reaction evidence="1">
        <text>a monocarboxylic acid amide + H2O = a monocarboxylate + NH4(+)</text>
        <dbReference type="Rhea" id="RHEA:12020"/>
        <dbReference type="ChEBI" id="CHEBI:15377"/>
        <dbReference type="ChEBI" id="CHEBI:28938"/>
        <dbReference type="ChEBI" id="CHEBI:35757"/>
        <dbReference type="ChEBI" id="CHEBI:83628"/>
        <dbReference type="EC" id="3.5.1.4"/>
    </reaction>
</comment>
<comment type="similarity">
    <text evidence="1">Belongs to the carbon-nitrogen hydrolase superfamily. Aliphatic amidase family.</text>
</comment>
<organism>
    <name type="scientific">Helicobacter pylori (strain Shi470)</name>
    <dbReference type="NCBI Taxonomy" id="512562"/>
    <lineage>
        <taxon>Bacteria</taxon>
        <taxon>Pseudomonadati</taxon>
        <taxon>Campylobacterota</taxon>
        <taxon>Epsilonproteobacteria</taxon>
        <taxon>Campylobacterales</taxon>
        <taxon>Helicobacteraceae</taxon>
        <taxon>Helicobacter</taxon>
    </lineage>
</organism>
<protein>
    <recommendedName>
        <fullName evidence="1">Aliphatic amidase</fullName>
        <ecNumber evidence="1">3.5.1.4</ecNumber>
    </recommendedName>
    <alternativeName>
        <fullName evidence="1">Acylamide amidohydrolase</fullName>
    </alternativeName>
</protein>
<dbReference type="EC" id="3.5.1.4" evidence="1"/>
<dbReference type="EMBL" id="CP001072">
    <property type="protein sequence ID" value="ACD47757.1"/>
    <property type="molecule type" value="Genomic_DNA"/>
</dbReference>
<dbReference type="RefSeq" id="WP_001215734.1">
    <property type="nucleotide sequence ID" value="NC_010698.2"/>
</dbReference>
<dbReference type="SMR" id="B2USC5"/>
<dbReference type="KEGG" id="hps:HPSH_01525"/>
<dbReference type="HOGENOM" id="CLU_071797_0_0_7"/>
<dbReference type="GO" id="GO:0004040">
    <property type="term" value="F:amidase activity"/>
    <property type="evidence" value="ECO:0007669"/>
    <property type="project" value="UniProtKB-UniRule"/>
</dbReference>
<dbReference type="CDD" id="cd07565">
    <property type="entry name" value="aliphatic_amidase"/>
    <property type="match status" value="1"/>
</dbReference>
<dbReference type="FunFam" id="3.60.110.10:FF:000014">
    <property type="entry name" value="Aliphatic amidase"/>
    <property type="match status" value="1"/>
</dbReference>
<dbReference type="Gene3D" id="3.60.110.10">
    <property type="entry name" value="Carbon-nitrogen hydrolase"/>
    <property type="match status" value="1"/>
</dbReference>
<dbReference type="HAMAP" id="MF_01242">
    <property type="entry name" value="Aliphatic_amidase"/>
    <property type="match status" value="1"/>
</dbReference>
<dbReference type="InterPro" id="IPR050345">
    <property type="entry name" value="Aliph_Amidase/BUP"/>
</dbReference>
<dbReference type="InterPro" id="IPR023719">
    <property type="entry name" value="Aliphatic_amidase"/>
</dbReference>
<dbReference type="InterPro" id="IPR003010">
    <property type="entry name" value="C-N_Hydrolase"/>
</dbReference>
<dbReference type="InterPro" id="IPR036526">
    <property type="entry name" value="C-N_Hydrolase_sf"/>
</dbReference>
<dbReference type="NCBIfam" id="NF009802">
    <property type="entry name" value="PRK13286.1"/>
    <property type="match status" value="1"/>
</dbReference>
<dbReference type="PANTHER" id="PTHR43674:SF14">
    <property type="entry name" value="ALIPHATIC AMIDASE"/>
    <property type="match status" value="1"/>
</dbReference>
<dbReference type="PANTHER" id="PTHR43674">
    <property type="entry name" value="NITRILASE C965.09-RELATED"/>
    <property type="match status" value="1"/>
</dbReference>
<dbReference type="Pfam" id="PF00795">
    <property type="entry name" value="CN_hydrolase"/>
    <property type="match status" value="1"/>
</dbReference>
<dbReference type="SUPFAM" id="SSF56317">
    <property type="entry name" value="Carbon-nitrogen hydrolase"/>
    <property type="match status" value="1"/>
</dbReference>
<dbReference type="PROSITE" id="PS50263">
    <property type="entry name" value="CN_HYDROLASE"/>
    <property type="match status" value="1"/>
</dbReference>
<sequence>MRHGDISSSPDTVGVAVVNYKMPRLHTKNEVLENCRNIAKVIGGVKQGLPGLDLIIFPEYSTHGIMYDRQEMFDTAASVPGEETAILAEACKKNKVWGVFSLTGEKHEQAKKNPYNTLILVNDKGEIVQKYRKILPWCPIECWYPGDKTYVVDGPKGLKVSLIICDDGNYPEIWRDCAMRGAELIVRCQGYMYPAKEQQIAIVKAMAWANQCYVAVANATGFDGVYSYFGHSSIIGFDGHTLGECGEEENGLQYAQLSVQQIRDARKYDQSQNQLFKLLHRGYSGVFASGDGDKGVAECPFEFYKTWVNDPKKAQENVEKFTRPSVGVAACPVGDLPTK</sequence>
<proteinExistence type="inferred from homology"/>
<gene>
    <name evidence="1" type="primary">amiE</name>
    <name type="ordered locus">HPSH_01525</name>
</gene>
<accession>B2USC5</accession>
<reference key="1">
    <citation type="submission" date="2008-05" db="EMBL/GenBank/DDBJ databases">
        <title>Genome sequence of Helicobacter pylori from the remote Amazon: traces of Asian ancestry of the first Americans.</title>
        <authorList>
            <person name="Kersulyte D."/>
            <person name="Kalia A."/>
            <person name="Gilman R.H."/>
            <person name="Berg D.E."/>
        </authorList>
    </citation>
    <scope>NUCLEOTIDE SEQUENCE [LARGE SCALE GENOMIC DNA]</scope>
    <source>
        <strain>Shi470</strain>
    </source>
</reference>
<feature type="chain" id="PRO_1000139808" description="Aliphatic amidase">
    <location>
        <begin position="1"/>
        <end position="339"/>
    </location>
</feature>
<feature type="domain" description="CN hydrolase" evidence="2">
    <location>
        <begin position="13"/>
        <end position="259"/>
    </location>
</feature>
<feature type="active site" description="Proton acceptor" evidence="1">
    <location>
        <position position="59"/>
    </location>
</feature>
<feature type="active site" description="Proton donor" evidence="1">
    <location>
        <position position="133"/>
    </location>
</feature>
<feature type="active site" description="Nucleophile" evidence="1">
    <location>
        <position position="165"/>
    </location>
</feature>
<name>AMIE_HELPS</name>
<evidence type="ECO:0000255" key="1">
    <source>
        <dbReference type="HAMAP-Rule" id="MF_01242"/>
    </source>
</evidence>
<evidence type="ECO:0000255" key="2">
    <source>
        <dbReference type="PROSITE-ProRule" id="PRU00054"/>
    </source>
</evidence>
<keyword id="KW-0378">Hydrolase</keyword>